<evidence type="ECO:0000269" key="1">
    <source>
    </source>
</evidence>
<evidence type="ECO:0000269" key="2">
    <source>
    </source>
</evidence>
<evidence type="ECO:0000269" key="3">
    <source>
    </source>
</evidence>
<evidence type="ECO:0000269" key="4">
    <source>
    </source>
</evidence>
<evidence type="ECO:0000269" key="5">
    <source>
    </source>
</evidence>
<evidence type="ECO:0000269" key="6">
    <source>
    </source>
</evidence>
<evidence type="ECO:0000269" key="7">
    <source>
    </source>
</evidence>
<evidence type="ECO:0000269" key="8">
    <source>
    </source>
</evidence>
<evidence type="ECO:0000305" key="9"/>
<evidence type="ECO:0007829" key="10">
    <source>
        <dbReference type="PDB" id="3F3F"/>
    </source>
</evidence>
<evidence type="ECO:0007829" key="11">
    <source>
        <dbReference type="PDB" id="3F3P"/>
    </source>
</evidence>
<keyword id="KW-0002">3D-structure</keyword>
<keyword id="KW-0903">Direct protein sequencing</keyword>
<keyword id="KW-0472">Membrane</keyword>
<keyword id="KW-0509">mRNA transport</keyword>
<keyword id="KW-0906">Nuclear pore complex</keyword>
<keyword id="KW-0539">Nucleus</keyword>
<keyword id="KW-0653">Protein transport</keyword>
<keyword id="KW-1185">Reference proteome</keyword>
<keyword id="KW-0811">Translocation</keyword>
<keyword id="KW-0813">Transport</keyword>
<sequence length="744" mass="84898">MTIDDSNRLLMDVDQFDFLDDGTAQLSNNKTDEEEQLYKRDPVSGAILVPMTVNDQPIEKNGDKMPLKFKLGPLSYQNMAFITAKDKYKLYPVRIPRLDTSKEFSAYVSGLFEIYRDLGDDRVFNVPTIGVVNSNFAKEHNATVNLAMEAILNELEVFIGRVKDQDGRVNRFYELEESLTVLNCLRTMYFILDGQDVEENRSEFIESLLNWINRSDGEPDEEYIEQVFSVKDSTAGKKVFETQYFWKLLNQLVLRGLLSQAIGCIERSDLLPYLSDTCAVSFDAVSDSIELLKQYPKDSSSTFREWKNLVLKLSQAFGSSATDISGELRDYIEDFLLVIGGNQRKILQYSRTWYESFCGFLLYYIPSLELSAEYLQMSLEANVVDITNDWEQPCVDIISGKIHSILPVMESLDSCTAAFTAMICEAKGLIENIFEGEKNSDDYSNEDNEMLEDLFSYRNGMASYMLNSFAFELCSLGDKELWPVAIGLIALSATGTRSAKKMVIAELLPHYPFVTNDDIEWMLSICVEWRLPEIAKEIYTTLGNQMLSAHNIIESIANFSRAGKYELVKSYSWLLFEASCMEGQKLDDPVLNAIVSKNSPAEDDVIIPQDILDCVVTNSMRQTLAPYAVLSQFYELRDREDWGQALRLLLLLIEFPYLPKHYLVLLVAKFLYPIFLLDDKKLMDEDSVATVIEVIETKWDDADEKSSNLYETIIEADKSLPSSMATLLKNLRKKLNFKLCQAFM</sequence>
<comment type="function">
    <text evidence="1 2 3 4 5 7 8">Functions as a component of the nuclear pore complex (NPC). NPC components, collectively referred to as nucleoporins (NUPs), can play the role of both NPC structural components and of docking or interaction partners for transiently associated nuclear transport factors. NUP85 is involved in nuclear poly(A)+ RNA and pre-ribosome export, in GSP1 nuclear import, in NPC assembly and distribution, as well as in nuclear envelope organization.</text>
</comment>
<comment type="subunit">
    <text evidence="1 4 8">Component of the nuclear pore complex (NPC). NPC constitutes the exclusive means of nucleocytoplasmic transport. NPCs allow the passive diffusion of ions and small molecules and the active, nuclear transport receptor-mediated bidirectional transport of macromolecules such as proteins, RNAs, ribonucleoparticles (RNPs), and ribosomal subunits across the nuclear envelope. Due to its 8-fold rotational symmetry, all subunits are present with 8 copies or multiples thereof. NUP85 is part of the heptameric 0.5 MDa autoassembling NUP84 NPC subcomplex (NUP84, NUP85, NUP120, NUP133, NUP145C, SEC13 and SEH1). NUP85 also interacts directly with the GLFG repeats of NUP116 and directly or indirectly with the mRNA transport factor MTR2.</text>
</comment>
<comment type="interaction">
    <interactant intactId="EBI-12345">
        <id>P46673</id>
    </interactant>
    <interactant intactId="EBI-11698">
        <id>Q02629</id>
        <label>NUP100</label>
    </interactant>
    <organismsDiffer>false</organismsDiffer>
    <experiments>4</experiments>
</comment>
<comment type="interaction">
    <interactant intactId="EBI-12345">
        <id>P46673</id>
    </interactant>
    <interactant intactId="EBI-11703">
        <id>Q02630</id>
        <label>NUP116</label>
    </interactant>
    <organismsDiffer>false</organismsDiffer>
    <experiments>3</experiments>
</comment>
<comment type="interaction">
    <interactant intactId="EBI-12345">
        <id>P46673</id>
    </interactant>
    <interactant intactId="EBI-11713">
        <id>P35729</id>
        <label>NUP120</label>
    </interactant>
    <organismsDiffer>false</organismsDiffer>
    <experiments>22</experiments>
</comment>
<comment type="interaction">
    <interactant intactId="EBI-12345">
        <id>P46673</id>
    </interactant>
    <interactant intactId="EBI-11722">
        <id>P36161</id>
        <label>NUP133</label>
    </interactant>
    <organismsDiffer>false</organismsDiffer>
    <experiments>3</experiments>
</comment>
<comment type="interaction">
    <interactant intactId="EBI-12345">
        <id>P46673</id>
    </interactant>
    <interactant intactId="EBI-11730">
        <id>P49687</id>
        <label>NUP145</label>
    </interactant>
    <organismsDiffer>false</organismsDiffer>
    <experiments>13</experiments>
</comment>
<comment type="interaction">
    <interactant intactId="EBI-12345">
        <id>P46673</id>
    </interactant>
    <interactant intactId="EBI-16940">
        <id>P53011</id>
        <label>SEH1</label>
    </interactant>
    <organismsDiffer>false</organismsDiffer>
    <experiments>11</experiments>
</comment>
<comment type="interaction">
    <interactant intactId="EBI-12345">
        <id>P46673</id>
    </interactant>
    <interactant intactId="EBI-295695">
        <id>Q8WUM0</id>
        <label>NUP133</label>
    </interactant>
    <organismsDiffer>true</organismsDiffer>
    <experiments>5</experiments>
</comment>
<comment type="subcellular location">
    <subcellularLocation>
        <location evidence="1">Nucleus</location>
        <location evidence="1">Nuclear pore complex</location>
    </subcellularLocation>
    <subcellularLocation>
        <location>Nucleus membrane</location>
        <topology>Peripheral membrane protein</topology>
        <orientation>Cytoplasmic side</orientation>
    </subcellularLocation>
    <subcellularLocation>
        <location>Nucleus membrane</location>
        <topology>Peripheral membrane protein</topology>
        <orientation>Nucleoplasmic side</orientation>
    </subcellularLocation>
    <text>Symmetric distribution.</text>
</comment>
<comment type="miscellaneous">
    <text evidence="6">Present with 7920 molecules/cell in log phase SD medium.</text>
</comment>
<comment type="similarity">
    <text evidence="9">Belongs to the nucleoporin Nup85 family.</text>
</comment>
<reference key="1">
    <citation type="journal article" date="1996" name="Mol. Biol. Cell">
        <title>Pleiotropic nuclear defects associated with a conditional allele of the novel nucleoporin Rat9p/Nup85p.</title>
        <authorList>
            <person name="Goldstein A.L."/>
            <person name="Snay C.A."/>
            <person name="Heath C.V."/>
            <person name="Cole C.N."/>
        </authorList>
    </citation>
    <scope>NUCLEOTIDE SEQUENCE [GENOMIC DNA]</scope>
    <scope>FUNCTION IN NUCLEAR MRNA EXPORT; NPC ASSEMBLY AND DISTRIBUTION</scope>
    <source>
        <strain>ATCC 90840 / EAY235 / FY23</strain>
    </source>
</reference>
<reference key="2">
    <citation type="journal article" date="1996" name="Cell">
        <title>A novel complex of nucleoporins, which includes Sec13p and a Sec13p homolog, is essential for normal nuclear pores.</title>
        <authorList>
            <person name="Siniossoglou S."/>
            <person name="Wimmer C."/>
            <person name="Rieger M."/>
            <person name="Doye V."/>
            <person name="Tekotte H."/>
            <person name="Weise C."/>
            <person name="Emig S."/>
            <person name="Segref A."/>
            <person name="Hurt E.C."/>
        </authorList>
    </citation>
    <scope>NUCLEOTIDE SEQUENCE [GENOMIC DNA]</scope>
    <scope>PROTEIN SEQUENCE OF 31-39; 123-138 AND 708-718</scope>
    <scope>NUCLEAR ENVELOPE ORGANIZATION</scope>
</reference>
<reference key="3">
    <citation type="journal article" date="1995" name="Yeast">
        <title>Analysis of a 42.5 kb DNA sequence of chromosome X reveals three tRNA genes and 14 new open reading frames including a gene most probably belonging to the family of ubiquitin-protein ligases.</title>
        <authorList>
            <person name="Huang M.-E."/>
            <person name="Chuat J.-C."/>
            <person name="Galibert F."/>
        </authorList>
    </citation>
    <scope>NUCLEOTIDE SEQUENCE [GENOMIC DNA]</scope>
    <source>
        <strain>ATCC 204508 / S288c</strain>
    </source>
</reference>
<reference key="4">
    <citation type="journal article" date="1996" name="EMBO J.">
        <title>Complete nucleotide sequence of Saccharomyces cerevisiae chromosome X.</title>
        <authorList>
            <person name="Galibert F."/>
            <person name="Alexandraki D."/>
            <person name="Baur A."/>
            <person name="Boles E."/>
            <person name="Chalwatzis N."/>
            <person name="Chuat J.-C."/>
            <person name="Coster F."/>
            <person name="Cziepluch C."/>
            <person name="de Haan M."/>
            <person name="Domdey H."/>
            <person name="Durand P."/>
            <person name="Entian K.-D."/>
            <person name="Gatius M."/>
            <person name="Goffeau A."/>
            <person name="Grivell L.A."/>
            <person name="Hennemann A."/>
            <person name="Herbert C.J."/>
            <person name="Heumann K."/>
            <person name="Hilger F."/>
            <person name="Hollenberg C.P."/>
            <person name="Huang M.-E."/>
            <person name="Jacq C."/>
            <person name="Jauniaux J.-C."/>
            <person name="Katsoulou C."/>
            <person name="Kirchrath L."/>
            <person name="Kleine K."/>
            <person name="Kordes E."/>
            <person name="Koetter P."/>
            <person name="Liebl S."/>
            <person name="Louis E.J."/>
            <person name="Manus V."/>
            <person name="Mewes H.-W."/>
            <person name="Miosga T."/>
            <person name="Obermaier B."/>
            <person name="Perea J."/>
            <person name="Pohl T.M."/>
            <person name="Portetelle D."/>
            <person name="Pujol A."/>
            <person name="Purnelle B."/>
            <person name="Ramezani Rad M."/>
            <person name="Rasmussen S.W."/>
            <person name="Rose M."/>
            <person name="Rossau R."/>
            <person name="Schaaff-Gerstenschlaeger I."/>
            <person name="Smits P.H.M."/>
            <person name="Scarcez T."/>
            <person name="Soriano N."/>
            <person name="To Van D."/>
            <person name="Tzermia M."/>
            <person name="Van Broekhoven A."/>
            <person name="Vandenbol M."/>
            <person name="Wedler H."/>
            <person name="von Wettstein D."/>
            <person name="Wambutt R."/>
            <person name="Zagulski M."/>
            <person name="Zollner A."/>
            <person name="Karpfinger-Hartl L."/>
        </authorList>
    </citation>
    <scope>NUCLEOTIDE SEQUENCE [LARGE SCALE GENOMIC DNA]</scope>
    <source>
        <strain>ATCC 204508 / S288c</strain>
    </source>
</reference>
<reference key="5">
    <citation type="journal article" date="2014" name="G3 (Bethesda)">
        <title>The reference genome sequence of Saccharomyces cerevisiae: Then and now.</title>
        <authorList>
            <person name="Engel S.R."/>
            <person name="Dietrich F.S."/>
            <person name="Fisk D.G."/>
            <person name="Binkley G."/>
            <person name="Balakrishnan R."/>
            <person name="Costanzo M.C."/>
            <person name="Dwight S.S."/>
            <person name="Hitz B.C."/>
            <person name="Karra K."/>
            <person name="Nash R.S."/>
            <person name="Weng S."/>
            <person name="Wong E.D."/>
            <person name="Lloyd P."/>
            <person name="Skrzypek M.S."/>
            <person name="Miyasato S.R."/>
            <person name="Simison M."/>
            <person name="Cherry J.M."/>
        </authorList>
    </citation>
    <scope>GENOME REANNOTATION</scope>
    <source>
        <strain>ATCC 204508 / S288c</strain>
    </source>
</reference>
<reference key="6">
    <citation type="journal article" date="1998" name="Mol. Cell. Biol.">
        <title>Nuclear mRNA export requires complex formation between Mex67p and Mtr2p at the nuclear pores.</title>
        <authorList>
            <person name="Santos-Rosa H."/>
            <person name="Moreno H."/>
            <person name="Simos G."/>
            <person name="Segref A."/>
            <person name="Fahrenkrog B."/>
            <person name="Pante N."/>
            <person name="Hurt E.C."/>
        </authorList>
    </citation>
    <scope>FUNCTION</scope>
    <scope>INTERACTION WITH MTR2</scope>
</reference>
<reference key="7">
    <citation type="journal article" date="2000" name="J. Cell Biol.">
        <title>The yeast nuclear pore complex: composition, architecture, and transport mechanism.</title>
        <authorList>
            <person name="Rout M.P."/>
            <person name="Aitchison J.D."/>
            <person name="Suprapto A."/>
            <person name="Hjertaas K."/>
            <person name="Zhao Y."/>
            <person name="Chait B.T."/>
        </authorList>
    </citation>
    <scope>FUNCTION</scope>
    <scope>IDENTIFICATION IN THE NUCLEAR PORE COMPLEX</scope>
    <scope>SUBCELLULAR LOCATION</scope>
</reference>
<reference key="8">
    <citation type="journal article" date="2000" name="Mol. Biol. Cell">
        <title>Factors affecting nuclear export of the 60S ribosomal subunit in vivo.</title>
        <authorList>
            <person name="Stage-Zimmermann T."/>
            <person name="Schmidt U."/>
            <person name="Silver P.A."/>
        </authorList>
    </citation>
    <scope>FUNCTION</scope>
    <scope>PRE-RIBOSOME EXPORT</scope>
</reference>
<reference key="9">
    <citation type="journal article" date="2002" name="Mol. Cell. Proteomics">
        <title>Deciphering networks of protein interactions at the nuclear pore complex.</title>
        <authorList>
            <person name="Allen N.P."/>
            <person name="Patel S.S."/>
            <person name="Huang L."/>
            <person name="Chalkley R.J."/>
            <person name="Burlingame A."/>
            <person name="Lutzmann M."/>
            <person name="Hurt E.C."/>
            <person name="Rexach M."/>
        </authorList>
    </citation>
    <scope>FUNCTION</scope>
    <scope>INTERACTION WITH NUP116 GLFG REPEATS</scope>
</reference>
<reference key="10">
    <citation type="journal article" date="2002" name="EMBO J.">
        <title>Modular self-assembly of a Y-shaped multiprotein complex from seven nucleoporins.</title>
        <authorList>
            <person name="Lutzmann M."/>
            <person name="Kunze R."/>
            <person name="Buerer A."/>
            <person name="Aebi U."/>
            <person name="Hurt E.C."/>
        </authorList>
    </citation>
    <scope>FUNCTION</scope>
    <scope>NUP84 NPC SUBCOMPLEX ASSEMBLY/STRUCTURE</scope>
</reference>
<reference key="11">
    <citation type="journal article" date="2003" name="J. Biol. Chem.">
        <title>Nuclear accumulation of the small GTPase Gsp1p depends on nucleoporins Nup133p, Rat2p/Nup120p, Nup85p, Nic96p, and the acetyl-CoA carboxylase Acc1p.</title>
        <authorList>
            <person name="Gao H."/>
            <person name="Sumanaweera N."/>
            <person name="Bailer S.M."/>
            <person name="Stochaj U."/>
        </authorList>
    </citation>
    <scope>FUNCTION</scope>
    <scope>NUCLEAR GSP1 IMPORT</scope>
</reference>
<reference key="12">
    <citation type="journal article" date="2003" name="Nature">
        <title>Global analysis of protein expression in yeast.</title>
        <authorList>
            <person name="Ghaemmaghami S."/>
            <person name="Huh W.-K."/>
            <person name="Bower K."/>
            <person name="Howson R.W."/>
            <person name="Belle A."/>
            <person name="Dephoure N."/>
            <person name="O'Shea E.K."/>
            <person name="Weissman J.S."/>
        </authorList>
    </citation>
    <scope>LEVEL OF PROTEIN EXPRESSION [LARGE SCALE ANALYSIS]</scope>
</reference>
<reference key="13">
    <citation type="journal article" date="2003" name="Dev. Cell">
        <title>Peering through the pore: nuclear pore complex structure, assembly, and function.</title>
        <authorList>
            <person name="Suntharalingam M."/>
            <person name="Wente S.R."/>
        </authorList>
    </citation>
    <scope>REVIEW</scope>
</reference>
<dbReference type="EMBL" id="U36469">
    <property type="protein sequence ID" value="AAB48943.1"/>
    <property type="molecule type" value="Genomic_DNA"/>
</dbReference>
<dbReference type="EMBL" id="X90995">
    <property type="protein sequence ID" value="CAA62481.1"/>
    <property type="molecule type" value="Genomic_DNA"/>
</dbReference>
<dbReference type="EMBL" id="L36344">
    <property type="protein sequence ID" value="AAA88744.1"/>
    <property type="molecule type" value="Genomic_DNA"/>
</dbReference>
<dbReference type="EMBL" id="Z49542">
    <property type="protein sequence ID" value="CAA89569.1"/>
    <property type="molecule type" value="Genomic_DNA"/>
</dbReference>
<dbReference type="EMBL" id="BK006943">
    <property type="protein sequence ID" value="DAA08829.1"/>
    <property type="molecule type" value="Genomic_DNA"/>
</dbReference>
<dbReference type="PIR" id="S57061">
    <property type="entry name" value="S57061"/>
</dbReference>
<dbReference type="RefSeq" id="NP_012576.1">
    <property type="nucleotide sequence ID" value="NM_001181700.1"/>
</dbReference>
<dbReference type="PDB" id="3EWE">
    <property type="method" value="X-ray"/>
    <property type="resolution" value="3.50 A"/>
    <property type="chains" value="B/D=1-564"/>
</dbReference>
<dbReference type="PDB" id="3F3F">
    <property type="method" value="X-ray"/>
    <property type="resolution" value="2.90 A"/>
    <property type="chains" value="C/D/G/H=1-570"/>
</dbReference>
<dbReference type="PDB" id="3F3G">
    <property type="method" value="X-ray"/>
    <property type="resolution" value="3.75 A"/>
    <property type="chains" value="C/D/G/H=1-570"/>
</dbReference>
<dbReference type="PDB" id="3F3P">
    <property type="method" value="X-ray"/>
    <property type="resolution" value="3.20 A"/>
    <property type="chains" value="C/D/G/H/K/L=1-570"/>
</dbReference>
<dbReference type="PDB" id="4XMM">
    <property type="method" value="X-ray"/>
    <property type="resolution" value="7.38 A"/>
    <property type="chains" value="D=44-744"/>
</dbReference>
<dbReference type="PDB" id="4XMN">
    <property type="method" value="X-ray"/>
    <property type="resolution" value="7.60 A"/>
    <property type="chains" value="D=73-743"/>
</dbReference>
<dbReference type="PDB" id="6X08">
    <property type="method" value="X-ray"/>
    <property type="resolution" value="4.19 A"/>
    <property type="chains" value="B=1-564"/>
</dbReference>
<dbReference type="PDB" id="7N84">
    <property type="method" value="EM"/>
    <property type="resolution" value="11.60 A"/>
    <property type="chains" value="b/m=1-744"/>
</dbReference>
<dbReference type="PDB" id="7N9F">
    <property type="method" value="EM"/>
    <property type="resolution" value="37.00 A"/>
    <property type="chains" value="b/i=1-744"/>
</dbReference>
<dbReference type="PDB" id="8TIE">
    <property type="method" value="EM"/>
    <property type="resolution" value="8.10 A"/>
    <property type="chains" value="b/m=1-744"/>
</dbReference>
<dbReference type="PDBsum" id="3EWE"/>
<dbReference type="PDBsum" id="3F3F"/>
<dbReference type="PDBsum" id="3F3G"/>
<dbReference type="PDBsum" id="3F3P"/>
<dbReference type="PDBsum" id="4XMM"/>
<dbReference type="PDBsum" id="4XMN"/>
<dbReference type="PDBsum" id="6X08"/>
<dbReference type="PDBsum" id="7N84"/>
<dbReference type="PDBsum" id="7N9F"/>
<dbReference type="PDBsum" id="8TIE"/>
<dbReference type="EMDB" id="EMD-24231"/>
<dbReference type="EMDB" id="EMD-24258"/>
<dbReference type="EMDB" id="EMD-41285"/>
<dbReference type="SMR" id="P46673"/>
<dbReference type="BioGRID" id="33793">
    <property type="interactions" value="261"/>
</dbReference>
<dbReference type="ComplexPortal" id="CPX-824">
    <property type="entry name" value="Nuclear pore complex"/>
</dbReference>
<dbReference type="DIP" id="DIP-5818N"/>
<dbReference type="FunCoup" id="P46673">
    <property type="interactions" value="181"/>
</dbReference>
<dbReference type="IntAct" id="P46673">
    <property type="interactions" value="26"/>
</dbReference>
<dbReference type="MINT" id="P46673"/>
<dbReference type="STRING" id="4932.YJR042W"/>
<dbReference type="TCDB" id="1.I.1.1.1">
    <property type="family name" value="the nuclear pore complex (npc) family"/>
</dbReference>
<dbReference type="iPTMnet" id="P46673"/>
<dbReference type="PaxDb" id="4932-YJR042W"/>
<dbReference type="PeptideAtlas" id="P46673"/>
<dbReference type="ABCD" id="P46673">
    <property type="antibodies" value="1 sequenced antibody"/>
</dbReference>
<dbReference type="DNASU" id="853499"/>
<dbReference type="EnsemblFungi" id="YJR042W_mRNA">
    <property type="protein sequence ID" value="YJR042W"/>
    <property type="gene ID" value="YJR042W"/>
</dbReference>
<dbReference type="GeneID" id="853499"/>
<dbReference type="KEGG" id="sce:YJR042W"/>
<dbReference type="AGR" id="SGD:S000003803"/>
<dbReference type="SGD" id="S000003803">
    <property type="gene designation" value="NUP85"/>
</dbReference>
<dbReference type="VEuPathDB" id="FungiDB:YJR042W"/>
<dbReference type="eggNOG" id="KOG2271">
    <property type="taxonomic scope" value="Eukaryota"/>
</dbReference>
<dbReference type="GeneTree" id="ENSGT00390000000204"/>
<dbReference type="HOGENOM" id="CLU_019986_0_0_1"/>
<dbReference type="InParanoid" id="P46673"/>
<dbReference type="OMA" id="VKHYSWM"/>
<dbReference type="OrthoDB" id="17644at2759"/>
<dbReference type="BioCyc" id="YEAST:G3O-31677-MONOMER"/>
<dbReference type="Reactome" id="R-SCE-159236">
    <property type="pathway name" value="Transport of Mature mRNA derived from an Intron-Containing Transcript"/>
</dbReference>
<dbReference type="Reactome" id="R-SCE-3371453">
    <property type="pathway name" value="Regulation of HSF1-mediated heat shock response"/>
</dbReference>
<dbReference type="Reactome" id="R-SCE-4085377">
    <property type="pathway name" value="SUMOylation of SUMOylation proteins"/>
</dbReference>
<dbReference type="Reactome" id="R-SCE-4551638">
    <property type="pathway name" value="SUMOylation of chromatin organization proteins"/>
</dbReference>
<dbReference type="Reactome" id="R-SCE-4570464">
    <property type="pathway name" value="SUMOylation of RNA binding proteins"/>
</dbReference>
<dbReference type="BioGRID-ORCS" id="853499">
    <property type="hits" value="6 hits in 10 CRISPR screens"/>
</dbReference>
<dbReference type="EvolutionaryTrace" id="P46673"/>
<dbReference type="PRO" id="PR:P46673"/>
<dbReference type="Proteomes" id="UP000002311">
    <property type="component" value="Chromosome X"/>
</dbReference>
<dbReference type="RNAct" id="P46673">
    <property type="molecule type" value="protein"/>
</dbReference>
<dbReference type="GO" id="GO:0005635">
    <property type="term" value="C:nuclear envelope"/>
    <property type="evidence" value="ECO:0000303"/>
    <property type="project" value="ComplexPortal"/>
</dbReference>
<dbReference type="GO" id="GO:0031965">
    <property type="term" value="C:nuclear membrane"/>
    <property type="evidence" value="ECO:0007669"/>
    <property type="project" value="UniProtKB-SubCell"/>
</dbReference>
<dbReference type="GO" id="GO:0005643">
    <property type="term" value="C:nuclear pore"/>
    <property type="evidence" value="ECO:0000314"/>
    <property type="project" value="SGD"/>
</dbReference>
<dbReference type="GO" id="GO:0031080">
    <property type="term" value="C:nuclear pore outer ring"/>
    <property type="evidence" value="ECO:0000314"/>
    <property type="project" value="SGD"/>
</dbReference>
<dbReference type="GO" id="GO:0017056">
    <property type="term" value="F:structural constituent of nuclear pore"/>
    <property type="evidence" value="ECO:0000315"/>
    <property type="project" value="SGD"/>
</dbReference>
<dbReference type="GO" id="GO:0006406">
    <property type="term" value="P:mRNA export from nucleus"/>
    <property type="evidence" value="ECO:0000315"/>
    <property type="project" value="SGD"/>
</dbReference>
<dbReference type="GO" id="GO:0051664">
    <property type="term" value="P:nuclear pore localization"/>
    <property type="evidence" value="ECO:0000315"/>
    <property type="project" value="SGD"/>
</dbReference>
<dbReference type="GO" id="GO:0006913">
    <property type="term" value="P:nucleocytoplasmic transport"/>
    <property type="evidence" value="ECO:0000303"/>
    <property type="project" value="ComplexPortal"/>
</dbReference>
<dbReference type="GO" id="GO:0045893">
    <property type="term" value="P:positive regulation of DNA-templated transcription"/>
    <property type="evidence" value="ECO:0000314"/>
    <property type="project" value="SGD"/>
</dbReference>
<dbReference type="GO" id="GO:0006606">
    <property type="term" value="P:protein import into nucleus"/>
    <property type="evidence" value="ECO:0000315"/>
    <property type="project" value="SGD"/>
</dbReference>
<dbReference type="GO" id="GO:0000055">
    <property type="term" value="P:ribosomal large subunit export from nucleus"/>
    <property type="evidence" value="ECO:0000315"/>
    <property type="project" value="SGD"/>
</dbReference>
<dbReference type="Gene3D" id="2.20.25.500">
    <property type="match status" value="1"/>
</dbReference>
<dbReference type="IDEAL" id="IID50319"/>
<dbReference type="InterPro" id="IPR011502">
    <property type="entry name" value="Nucleoporin_Nup85"/>
</dbReference>
<dbReference type="PANTHER" id="PTHR13373">
    <property type="entry name" value="FROUNT PROTEIN-RELATED"/>
    <property type="match status" value="1"/>
</dbReference>
<dbReference type="PANTHER" id="PTHR13373:SF21">
    <property type="entry name" value="NUCLEAR PORE COMPLEX PROTEIN NUP85"/>
    <property type="match status" value="1"/>
</dbReference>
<dbReference type="Pfam" id="PF07575">
    <property type="entry name" value="Nucleopor_Nup85"/>
    <property type="match status" value="1"/>
</dbReference>
<feature type="chain" id="PRO_0000204885" description="Nucleoporin NUP85">
    <location>
        <begin position="1"/>
        <end position="744"/>
    </location>
</feature>
<feature type="sequence conflict" description="In Ref. 1; AAB48943." evidence="9" ref="1">
    <original>S</original>
    <variation>T</variation>
    <location>
        <position position="101"/>
    </location>
</feature>
<feature type="sequence conflict" description="In Ref. 1; AAB48943." evidence="9" ref="1">
    <original>F</original>
    <variation>L</variation>
    <location>
        <position position="471"/>
    </location>
</feature>
<feature type="strand" evidence="11">
    <location>
        <begin position="41"/>
        <end position="51"/>
    </location>
</feature>
<feature type="strand" evidence="10">
    <location>
        <begin position="67"/>
        <end position="74"/>
    </location>
</feature>
<feature type="strand" evidence="10">
    <location>
        <begin position="77"/>
        <end position="82"/>
    </location>
</feature>
<feature type="strand" evidence="10">
    <location>
        <begin position="89"/>
        <end position="91"/>
    </location>
</feature>
<feature type="helix" evidence="10">
    <location>
        <begin position="102"/>
        <end position="117"/>
    </location>
</feature>
<feature type="helix" evidence="10">
    <location>
        <begin position="119"/>
        <end position="122"/>
    </location>
</feature>
<feature type="helix" evidence="10">
    <location>
        <begin position="135"/>
        <end position="164"/>
    </location>
</feature>
<feature type="helix" evidence="10">
    <location>
        <begin position="170"/>
        <end position="189"/>
    </location>
</feature>
<feature type="strand" evidence="10">
    <location>
        <begin position="190"/>
        <end position="192"/>
    </location>
</feature>
<feature type="helix" evidence="10">
    <location>
        <begin position="197"/>
        <end position="200"/>
    </location>
</feature>
<feature type="helix" evidence="10">
    <location>
        <begin position="201"/>
        <end position="215"/>
    </location>
</feature>
<feature type="helix" evidence="10">
    <location>
        <begin position="221"/>
        <end position="227"/>
    </location>
</feature>
<feature type="strand" evidence="10">
    <location>
        <begin position="237"/>
        <end position="240"/>
    </location>
</feature>
<feature type="helix" evidence="10">
    <location>
        <begin position="243"/>
        <end position="254"/>
    </location>
</feature>
<feature type="helix" evidence="10">
    <location>
        <begin position="258"/>
        <end position="265"/>
    </location>
</feature>
<feature type="turn" evidence="10">
    <location>
        <begin position="266"/>
        <end position="271"/>
    </location>
</feature>
<feature type="helix" evidence="10">
    <location>
        <begin position="272"/>
        <end position="276"/>
    </location>
</feature>
<feature type="helix" evidence="10">
    <location>
        <begin position="279"/>
        <end position="292"/>
    </location>
</feature>
<feature type="helix" evidence="10">
    <location>
        <begin position="300"/>
        <end position="318"/>
    </location>
</feature>
<feature type="helix" evidence="10">
    <location>
        <begin position="326"/>
        <end position="340"/>
    </location>
</feature>
<feature type="helix" evidence="10">
    <location>
        <begin position="343"/>
        <end position="348"/>
    </location>
</feature>
<feature type="helix" evidence="10">
    <location>
        <begin position="353"/>
        <end position="363"/>
    </location>
</feature>
<feature type="helix" evidence="10">
    <location>
        <begin position="368"/>
        <end position="370"/>
    </location>
</feature>
<feature type="helix" evidence="10">
    <location>
        <begin position="371"/>
        <end position="381"/>
    </location>
</feature>
<feature type="strand" evidence="10">
    <location>
        <begin position="388"/>
        <end position="390"/>
    </location>
</feature>
<feature type="helix" evidence="10">
    <location>
        <begin position="391"/>
        <end position="398"/>
    </location>
</feature>
<feature type="helix" evidence="10">
    <location>
        <begin position="403"/>
        <end position="405"/>
    </location>
</feature>
<feature type="helix" evidence="10">
    <location>
        <begin position="406"/>
        <end position="412"/>
    </location>
</feature>
<feature type="helix" evidence="10">
    <location>
        <begin position="414"/>
        <end position="427"/>
    </location>
</feature>
<feature type="strand" evidence="10">
    <location>
        <begin position="454"/>
        <end position="459"/>
    </location>
</feature>
<feature type="helix" evidence="10">
    <location>
        <begin position="461"/>
        <end position="474"/>
    </location>
</feature>
<feature type="turn" evidence="10">
    <location>
        <begin position="479"/>
        <end position="481"/>
    </location>
</feature>
<feature type="helix" evidence="10">
    <location>
        <begin position="482"/>
        <end position="491"/>
    </location>
</feature>
<feature type="strand" evidence="10">
    <location>
        <begin position="493"/>
        <end position="495"/>
    </location>
</feature>
<feature type="helix" evidence="10">
    <location>
        <begin position="497"/>
        <end position="507"/>
    </location>
</feature>
<feature type="helix" evidence="10">
    <location>
        <begin position="508"/>
        <end position="510"/>
    </location>
</feature>
<feature type="helix" evidence="10">
    <location>
        <begin position="516"/>
        <end position="529"/>
    </location>
</feature>
<feature type="helix" evidence="10">
    <location>
        <begin position="532"/>
        <end position="543"/>
    </location>
</feature>
<feature type="helix" evidence="10">
    <location>
        <begin position="545"/>
        <end position="548"/>
    </location>
</feature>
<protein>
    <recommendedName>
        <fullName>Nucleoporin NUP85</fullName>
    </recommendedName>
    <alternativeName>
        <fullName>Nuclear pore protein NUP85</fullName>
    </alternativeName>
</protein>
<proteinExistence type="evidence at protein level"/>
<gene>
    <name type="primary">NUP85</name>
    <name type="synonym">RAT9</name>
    <name type="ordered locus">YJR042W</name>
    <name type="ORF">J1624</name>
</gene>
<name>NUP85_YEAST</name>
<organism>
    <name type="scientific">Saccharomyces cerevisiae (strain ATCC 204508 / S288c)</name>
    <name type="common">Baker's yeast</name>
    <dbReference type="NCBI Taxonomy" id="559292"/>
    <lineage>
        <taxon>Eukaryota</taxon>
        <taxon>Fungi</taxon>
        <taxon>Dikarya</taxon>
        <taxon>Ascomycota</taxon>
        <taxon>Saccharomycotina</taxon>
        <taxon>Saccharomycetes</taxon>
        <taxon>Saccharomycetales</taxon>
        <taxon>Saccharomycetaceae</taxon>
        <taxon>Saccharomyces</taxon>
    </lineage>
</organism>
<accession>P46673</accession>
<accession>D6VWL3</accession>